<feature type="chain" id="PRO_0000366283" description="Ribosomal RNA large subunit methyltransferase I">
    <location>
        <begin position="1"/>
        <end position="396"/>
    </location>
</feature>
<feature type="domain" description="PUA" evidence="1">
    <location>
        <begin position="2"/>
        <end position="81"/>
    </location>
</feature>
<keyword id="KW-0963">Cytoplasm</keyword>
<keyword id="KW-0489">Methyltransferase</keyword>
<keyword id="KW-0694">RNA-binding</keyword>
<keyword id="KW-0698">rRNA processing</keyword>
<keyword id="KW-0949">S-adenosyl-L-methionine</keyword>
<keyword id="KW-0808">Transferase</keyword>
<dbReference type="EC" id="2.1.1.191" evidence="1"/>
<dbReference type="EMBL" id="CP000308">
    <property type="protein sequence ID" value="ABG12705.1"/>
    <property type="molecule type" value="Genomic_DNA"/>
</dbReference>
<dbReference type="RefSeq" id="WP_002213052.1">
    <property type="nucleotide sequence ID" value="NZ_CP009906.1"/>
</dbReference>
<dbReference type="SMR" id="Q1CA17"/>
<dbReference type="GeneID" id="57977118"/>
<dbReference type="KEGG" id="ypa:YPA_0737"/>
<dbReference type="Proteomes" id="UP000001971">
    <property type="component" value="Chromosome"/>
</dbReference>
<dbReference type="GO" id="GO:0005737">
    <property type="term" value="C:cytoplasm"/>
    <property type="evidence" value="ECO:0007669"/>
    <property type="project" value="UniProtKB-SubCell"/>
</dbReference>
<dbReference type="GO" id="GO:0003723">
    <property type="term" value="F:RNA binding"/>
    <property type="evidence" value="ECO:0007669"/>
    <property type="project" value="UniProtKB-KW"/>
</dbReference>
<dbReference type="GO" id="GO:0016434">
    <property type="term" value="F:rRNA (cytosine) methyltransferase activity"/>
    <property type="evidence" value="ECO:0007669"/>
    <property type="project" value="UniProtKB-UniRule"/>
</dbReference>
<dbReference type="CDD" id="cd02440">
    <property type="entry name" value="AdoMet_MTases"/>
    <property type="match status" value="1"/>
</dbReference>
<dbReference type="CDD" id="cd21153">
    <property type="entry name" value="PUA_RlmI"/>
    <property type="match status" value="1"/>
</dbReference>
<dbReference type="CDD" id="cd11572">
    <property type="entry name" value="RlmI_M_like"/>
    <property type="match status" value="1"/>
</dbReference>
<dbReference type="Gene3D" id="2.30.130.10">
    <property type="entry name" value="PUA domain"/>
    <property type="match status" value="1"/>
</dbReference>
<dbReference type="Gene3D" id="3.30.750.80">
    <property type="entry name" value="RNA methyltransferase domain (HRMD) like"/>
    <property type="match status" value="1"/>
</dbReference>
<dbReference type="Gene3D" id="3.40.50.150">
    <property type="entry name" value="Vaccinia Virus protein VP39"/>
    <property type="match status" value="1"/>
</dbReference>
<dbReference type="HAMAP" id="MF_01857">
    <property type="entry name" value="23SrRNA_methyltr_I"/>
    <property type="match status" value="1"/>
</dbReference>
<dbReference type="InterPro" id="IPR002478">
    <property type="entry name" value="PUA"/>
</dbReference>
<dbReference type="InterPro" id="IPR015947">
    <property type="entry name" value="PUA-like_sf"/>
</dbReference>
<dbReference type="InterPro" id="IPR036974">
    <property type="entry name" value="PUA_sf"/>
</dbReference>
<dbReference type="InterPro" id="IPR023542">
    <property type="entry name" value="RLMI"/>
</dbReference>
<dbReference type="InterPro" id="IPR041532">
    <property type="entry name" value="RlmI-like_PUA"/>
</dbReference>
<dbReference type="InterPro" id="IPR019614">
    <property type="entry name" value="SAM-dep_methyl-trfase"/>
</dbReference>
<dbReference type="InterPro" id="IPR029063">
    <property type="entry name" value="SAM-dependent_MTases_sf"/>
</dbReference>
<dbReference type="NCBIfam" id="NF011707">
    <property type="entry name" value="PRK15128.1"/>
    <property type="match status" value="1"/>
</dbReference>
<dbReference type="PANTHER" id="PTHR42873">
    <property type="entry name" value="RIBOSOMAL RNA LARGE SUBUNIT METHYLTRANSFERASE"/>
    <property type="match status" value="1"/>
</dbReference>
<dbReference type="PANTHER" id="PTHR42873:SF1">
    <property type="entry name" value="S-ADENOSYLMETHIONINE-DEPENDENT METHYLTRANSFERASE DOMAIN-CONTAINING PROTEIN"/>
    <property type="match status" value="1"/>
</dbReference>
<dbReference type="Pfam" id="PF10672">
    <property type="entry name" value="Methyltrans_SAM"/>
    <property type="match status" value="1"/>
</dbReference>
<dbReference type="Pfam" id="PF17785">
    <property type="entry name" value="PUA_3"/>
    <property type="match status" value="1"/>
</dbReference>
<dbReference type="SMART" id="SM00359">
    <property type="entry name" value="PUA"/>
    <property type="match status" value="1"/>
</dbReference>
<dbReference type="SUPFAM" id="SSF88697">
    <property type="entry name" value="PUA domain-like"/>
    <property type="match status" value="1"/>
</dbReference>
<dbReference type="SUPFAM" id="SSF53335">
    <property type="entry name" value="S-adenosyl-L-methionine-dependent methyltransferases"/>
    <property type="match status" value="1"/>
</dbReference>
<dbReference type="PROSITE" id="PS50890">
    <property type="entry name" value="PUA"/>
    <property type="match status" value="1"/>
</dbReference>
<reference key="1">
    <citation type="journal article" date="2006" name="J. Bacteriol.">
        <title>Complete genome sequence of Yersinia pestis strains Antiqua and Nepal516: evidence of gene reduction in an emerging pathogen.</title>
        <authorList>
            <person name="Chain P.S.G."/>
            <person name="Hu P."/>
            <person name="Malfatti S.A."/>
            <person name="Radnedge L."/>
            <person name="Larimer F."/>
            <person name="Vergez L.M."/>
            <person name="Worsham P."/>
            <person name="Chu M.C."/>
            <person name="Andersen G.L."/>
        </authorList>
    </citation>
    <scope>NUCLEOTIDE SEQUENCE [LARGE SCALE GENOMIC DNA]</scope>
    <source>
        <strain>Antiqua</strain>
    </source>
</reference>
<protein>
    <recommendedName>
        <fullName evidence="1">Ribosomal RNA large subunit methyltransferase I</fullName>
        <ecNumber evidence="1">2.1.1.191</ecNumber>
    </recommendedName>
    <alternativeName>
        <fullName evidence="1">23S rRNA m5C1962 methyltransferase</fullName>
    </alternativeName>
    <alternativeName>
        <fullName evidence="1">rRNA (cytosine-C(5)-)-methyltransferase RlmI</fullName>
    </alternativeName>
</protein>
<name>RLMI_YERPA</name>
<evidence type="ECO:0000255" key="1">
    <source>
        <dbReference type="HAMAP-Rule" id="MF_01857"/>
    </source>
</evidence>
<sequence>MTVRLILAKGREKSLLRRHPWIFSGAVQRLEGDALSGETIDILDSQGKWLARAAYSPESQILARVWTFQQDEVIDCAFFIRRLQQAQNWRDWLAQRDGLNGYRLIAGESDGLPGITIDRFQNFLVLQLLSAGAEYQRETLVSALQHCYPECSIYDRSDVSVRKKEGLPLTQGLICGEMPPALLPISENGMQLFVDIQQGHKTGFYLDQRDSRLAARNYANGRRVLNCFSYTGAFAVAALMGNCQQVISVDTSQSVLDIAKQNIELNQLDLSKTEFVRDDVFQLLRSYRAQGEKFDLIIMDPPKFVENKSQLASACRGYKDINMLAIQLLRPGGILLSFSCSGLMPVDLFQKILADAALDAGHDIQFIEQFRQAADHPVIAAYPEGLYLKGFACRVM</sequence>
<organism>
    <name type="scientific">Yersinia pestis bv. Antiqua (strain Antiqua)</name>
    <dbReference type="NCBI Taxonomy" id="360102"/>
    <lineage>
        <taxon>Bacteria</taxon>
        <taxon>Pseudomonadati</taxon>
        <taxon>Pseudomonadota</taxon>
        <taxon>Gammaproteobacteria</taxon>
        <taxon>Enterobacterales</taxon>
        <taxon>Yersiniaceae</taxon>
        <taxon>Yersinia</taxon>
    </lineage>
</organism>
<gene>
    <name evidence="1" type="primary">rlmI</name>
    <name type="ordered locus">YPA_0737</name>
</gene>
<comment type="function">
    <text evidence="1">Specifically methylates the cytosine at position 1962 (m5C1962) of 23S rRNA.</text>
</comment>
<comment type="catalytic activity">
    <reaction evidence="1">
        <text>cytidine(1962) in 23S rRNA + S-adenosyl-L-methionine = 5-methylcytidine(1962) in 23S rRNA + S-adenosyl-L-homocysteine + H(+)</text>
        <dbReference type="Rhea" id="RHEA:42912"/>
        <dbReference type="Rhea" id="RHEA-COMP:10382"/>
        <dbReference type="Rhea" id="RHEA-COMP:10386"/>
        <dbReference type="ChEBI" id="CHEBI:15378"/>
        <dbReference type="ChEBI" id="CHEBI:57856"/>
        <dbReference type="ChEBI" id="CHEBI:59789"/>
        <dbReference type="ChEBI" id="CHEBI:74483"/>
        <dbReference type="ChEBI" id="CHEBI:82748"/>
        <dbReference type="EC" id="2.1.1.191"/>
    </reaction>
</comment>
<comment type="subcellular location">
    <subcellularLocation>
        <location evidence="1">Cytoplasm</location>
    </subcellularLocation>
</comment>
<comment type="similarity">
    <text evidence="1">Belongs to the methyltransferase superfamily. RlmI family.</text>
</comment>
<proteinExistence type="inferred from homology"/>
<accession>Q1CA17</accession>